<feature type="chain" id="PRO_1000013424" description="Large ribosomal subunit protein bL34">
    <location>
        <begin position="1"/>
        <end position="44"/>
    </location>
</feature>
<feature type="region of interest" description="Disordered" evidence="2">
    <location>
        <begin position="1"/>
        <end position="21"/>
    </location>
</feature>
<organism>
    <name type="scientific">Rhodospirillum rubrum (strain ATCC 11170 / ATH 1.1.1 / DSM 467 / LMG 4362 / NCIMB 8255 / S1)</name>
    <dbReference type="NCBI Taxonomy" id="269796"/>
    <lineage>
        <taxon>Bacteria</taxon>
        <taxon>Pseudomonadati</taxon>
        <taxon>Pseudomonadota</taxon>
        <taxon>Alphaproteobacteria</taxon>
        <taxon>Rhodospirillales</taxon>
        <taxon>Rhodospirillaceae</taxon>
        <taxon>Rhodospirillum</taxon>
    </lineage>
</organism>
<comment type="similarity">
    <text evidence="1">Belongs to the bacterial ribosomal protein bL34 family.</text>
</comment>
<gene>
    <name evidence="1" type="primary">rpmH</name>
    <name type="ordered locus">Rru_A3336</name>
</gene>
<sequence>MKRTYQPSNLVRKRRHGFRSRLATVGGRRVLANRRAKGRKRLSA</sequence>
<accession>Q2RP15</accession>
<keyword id="KW-1185">Reference proteome</keyword>
<keyword id="KW-0687">Ribonucleoprotein</keyword>
<keyword id="KW-0689">Ribosomal protein</keyword>
<proteinExistence type="inferred from homology"/>
<reference key="1">
    <citation type="journal article" date="2011" name="Stand. Genomic Sci.">
        <title>Complete genome sequence of Rhodospirillum rubrum type strain (S1).</title>
        <authorList>
            <person name="Munk A.C."/>
            <person name="Copeland A."/>
            <person name="Lucas S."/>
            <person name="Lapidus A."/>
            <person name="Del Rio T.G."/>
            <person name="Barry K."/>
            <person name="Detter J.C."/>
            <person name="Hammon N."/>
            <person name="Israni S."/>
            <person name="Pitluck S."/>
            <person name="Brettin T."/>
            <person name="Bruce D."/>
            <person name="Han C."/>
            <person name="Tapia R."/>
            <person name="Gilna P."/>
            <person name="Schmutz J."/>
            <person name="Larimer F."/>
            <person name="Land M."/>
            <person name="Kyrpides N.C."/>
            <person name="Mavromatis K."/>
            <person name="Richardson P."/>
            <person name="Rohde M."/>
            <person name="Goeker M."/>
            <person name="Klenk H.P."/>
            <person name="Zhang Y."/>
            <person name="Roberts G.P."/>
            <person name="Reslewic S."/>
            <person name="Schwartz D.C."/>
        </authorList>
    </citation>
    <scope>NUCLEOTIDE SEQUENCE [LARGE SCALE GENOMIC DNA]</scope>
    <source>
        <strain>ATCC 11170 / ATH 1.1.1 / DSM 467 / LMG 4362 / NCIMB 8255 / S1</strain>
    </source>
</reference>
<name>RL34_RHORT</name>
<evidence type="ECO:0000255" key="1">
    <source>
        <dbReference type="HAMAP-Rule" id="MF_00391"/>
    </source>
</evidence>
<evidence type="ECO:0000256" key="2">
    <source>
        <dbReference type="SAM" id="MobiDB-lite"/>
    </source>
</evidence>
<evidence type="ECO:0000305" key="3"/>
<protein>
    <recommendedName>
        <fullName evidence="1">Large ribosomal subunit protein bL34</fullName>
    </recommendedName>
    <alternativeName>
        <fullName evidence="3">50S ribosomal protein L34</fullName>
    </alternativeName>
</protein>
<dbReference type="EMBL" id="CP000230">
    <property type="protein sequence ID" value="ABC24130.1"/>
    <property type="molecule type" value="Genomic_DNA"/>
</dbReference>
<dbReference type="RefSeq" id="WP_011391083.1">
    <property type="nucleotide sequence ID" value="NC_007643.1"/>
</dbReference>
<dbReference type="RefSeq" id="YP_428417.1">
    <property type="nucleotide sequence ID" value="NC_007643.1"/>
</dbReference>
<dbReference type="SMR" id="Q2RP15"/>
<dbReference type="STRING" id="269796.Rru_A3336"/>
<dbReference type="EnsemblBacteria" id="ABC24130">
    <property type="protein sequence ID" value="ABC24130"/>
    <property type="gene ID" value="Rru_A3336"/>
</dbReference>
<dbReference type="KEGG" id="rru:Rru_A3336"/>
<dbReference type="PATRIC" id="fig|269796.9.peg.3450"/>
<dbReference type="eggNOG" id="COG0230">
    <property type="taxonomic scope" value="Bacteria"/>
</dbReference>
<dbReference type="HOGENOM" id="CLU_129938_2_0_5"/>
<dbReference type="PhylomeDB" id="Q2RP15"/>
<dbReference type="Proteomes" id="UP000001929">
    <property type="component" value="Chromosome"/>
</dbReference>
<dbReference type="GO" id="GO:1990904">
    <property type="term" value="C:ribonucleoprotein complex"/>
    <property type="evidence" value="ECO:0007669"/>
    <property type="project" value="UniProtKB-KW"/>
</dbReference>
<dbReference type="GO" id="GO:0005840">
    <property type="term" value="C:ribosome"/>
    <property type="evidence" value="ECO:0007669"/>
    <property type="project" value="UniProtKB-KW"/>
</dbReference>
<dbReference type="GO" id="GO:0003735">
    <property type="term" value="F:structural constituent of ribosome"/>
    <property type="evidence" value="ECO:0007669"/>
    <property type="project" value="InterPro"/>
</dbReference>
<dbReference type="GO" id="GO:0006412">
    <property type="term" value="P:translation"/>
    <property type="evidence" value="ECO:0007669"/>
    <property type="project" value="UniProtKB-UniRule"/>
</dbReference>
<dbReference type="FunFam" id="1.10.287.3980:FF:000001">
    <property type="entry name" value="Mitochondrial ribosomal protein L34"/>
    <property type="match status" value="1"/>
</dbReference>
<dbReference type="Gene3D" id="1.10.287.3980">
    <property type="match status" value="1"/>
</dbReference>
<dbReference type="HAMAP" id="MF_00391">
    <property type="entry name" value="Ribosomal_bL34"/>
    <property type="match status" value="1"/>
</dbReference>
<dbReference type="InterPro" id="IPR000271">
    <property type="entry name" value="Ribosomal_bL34"/>
</dbReference>
<dbReference type="InterPro" id="IPR020939">
    <property type="entry name" value="Ribosomal_bL34_CS"/>
</dbReference>
<dbReference type="NCBIfam" id="TIGR01030">
    <property type="entry name" value="rpmH_bact"/>
    <property type="match status" value="1"/>
</dbReference>
<dbReference type="PANTHER" id="PTHR14503:SF4">
    <property type="entry name" value="LARGE RIBOSOMAL SUBUNIT PROTEIN BL34M"/>
    <property type="match status" value="1"/>
</dbReference>
<dbReference type="PANTHER" id="PTHR14503">
    <property type="entry name" value="MITOCHONDRIAL RIBOSOMAL PROTEIN 34 FAMILY MEMBER"/>
    <property type="match status" value="1"/>
</dbReference>
<dbReference type="Pfam" id="PF00468">
    <property type="entry name" value="Ribosomal_L34"/>
    <property type="match status" value="1"/>
</dbReference>
<dbReference type="PROSITE" id="PS00784">
    <property type="entry name" value="RIBOSOMAL_L34"/>
    <property type="match status" value="1"/>
</dbReference>